<organism>
    <name type="scientific">Mus musculus</name>
    <name type="common">Mouse</name>
    <dbReference type="NCBI Taxonomy" id="10090"/>
    <lineage>
        <taxon>Eukaryota</taxon>
        <taxon>Metazoa</taxon>
        <taxon>Chordata</taxon>
        <taxon>Craniata</taxon>
        <taxon>Vertebrata</taxon>
        <taxon>Euteleostomi</taxon>
        <taxon>Mammalia</taxon>
        <taxon>Eutheria</taxon>
        <taxon>Euarchontoglires</taxon>
        <taxon>Glires</taxon>
        <taxon>Rodentia</taxon>
        <taxon>Myomorpha</taxon>
        <taxon>Muroidea</taxon>
        <taxon>Muridae</taxon>
        <taxon>Murinae</taxon>
        <taxon>Mus</taxon>
        <taxon>Mus</taxon>
    </lineage>
</organism>
<feature type="chain" id="PRO_0000124527" description="Small ribosomal subunit protein uS7">
    <location>
        <begin position="1"/>
        <end position="204"/>
    </location>
</feature>
<feature type="initiator methionine" description="Removed; alternate" evidence="1">
    <location>
        <position position="1"/>
    </location>
</feature>
<feature type="chain" id="PRO_0000370370" description="Small ribosomal subunit protein uS7, N-terminally processed">
    <location>
        <begin position="2"/>
        <end position="204"/>
    </location>
</feature>
<feature type="modified residue" description="N-acetylmethionine" evidence="1">
    <location>
        <position position="1"/>
    </location>
</feature>
<feature type="modified residue" description="N-acetylthreonine; in 40S ribosomal protein S5, N-terminally processed" evidence="1">
    <location>
        <position position="2"/>
    </location>
</feature>
<feature type="modified residue" description="Phosphothreonine" evidence="1">
    <location>
        <position position="14"/>
    </location>
</feature>
<feature type="modified residue" description="N6-acetyllysine; alternate" evidence="6">
    <location>
        <position position="47"/>
    </location>
</feature>
<feature type="modified residue" description="Phosphoserine" evidence="1">
    <location>
        <position position="142"/>
    </location>
</feature>
<feature type="cross-link" description="Glycyl lysine isopeptide (Lys-Gly) (interchain with G-Cter in SUMO2); alternate" evidence="1">
    <location>
        <position position="47"/>
    </location>
</feature>
<feature type="sequence conflict" description="In Ref. 1; AAB63526 and 2; CAA73041." evidence="3" ref="1 2">
    <original>T</original>
    <variation>N</variation>
    <location>
        <position position="168"/>
    </location>
</feature>
<gene>
    <name type="primary">Rps5</name>
</gene>
<name>RS5_MOUSE</name>
<dbReference type="EMBL" id="U78085">
    <property type="protein sequence ID" value="AAB63526.1"/>
    <property type="molecule type" value="mRNA"/>
</dbReference>
<dbReference type="EMBL" id="Y12431">
    <property type="protein sequence ID" value="CAA73041.1"/>
    <property type="molecule type" value="mRNA"/>
</dbReference>
<dbReference type="EMBL" id="AK009663">
    <property type="protein sequence ID" value="BAB26424.1"/>
    <property type="molecule type" value="mRNA"/>
</dbReference>
<dbReference type="EMBL" id="AK002235">
    <property type="protein sequence ID" value="BAB21953.1"/>
    <property type="molecule type" value="mRNA"/>
</dbReference>
<dbReference type="EMBL" id="AK010681">
    <property type="protein sequence ID" value="BAB27113.1"/>
    <property type="molecule type" value="mRNA"/>
</dbReference>
<dbReference type="EMBL" id="AK012424">
    <property type="protein sequence ID" value="BAB28229.1"/>
    <property type="molecule type" value="mRNA"/>
</dbReference>
<dbReference type="EMBL" id="AK012481">
    <property type="protein sequence ID" value="BAB28270.1"/>
    <property type="molecule type" value="mRNA"/>
</dbReference>
<dbReference type="EMBL" id="AK020477">
    <property type="protein sequence ID" value="BAB32115.1"/>
    <property type="molecule type" value="mRNA"/>
</dbReference>
<dbReference type="EMBL" id="AK020754">
    <property type="protein sequence ID" value="BAB32203.1"/>
    <property type="molecule type" value="mRNA"/>
</dbReference>
<dbReference type="EMBL" id="AK050611">
    <property type="protein sequence ID" value="BAC34342.1"/>
    <property type="molecule type" value="mRNA"/>
</dbReference>
<dbReference type="EMBL" id="AK050622">
    <property type="protein sequence ID" value="BAC34347.1"/>
    <property type="molecule type" value="mRNA"/>
</dbReference>
<dbReference type="EMBL" id="AK152449">
    <property type="protein sequence ID" value="BAE31228.1"/>
    <property type="molecule type" value="mRNA"/>
</dbReference>
<dbReference type="EMBL" id="AK160552">
    <property type="protein sequence ID" value="BAE35868.1"/>
    <property type="molecule type" value="mRNA"/>
</dbReference>
<dbReference type="EMBL" id="AK164079">
    <property type="protein sequence ID" value="BAE37616.1"/>
    <property type="molecule type" value="mRNA"/>
</dbReference>
<dbReference type="EMBL" id="AK167533">
    <property type="protein sequence ID" value="BAE39602.1"/>
    <property type="molecule type" value="mRNA"/>
</dbReference>
<dbReference type="EMBL" id="AK168106">
    <property type="protein sequence ID" value="BAE40077.1"/>
    <property type="molecule type" value="mRNA"/>
</dbReference>
<dbReference type="EMBL" id="AK168044">
    <property type="protein sequence ID" value="BAE40026.1"/>
    <property type="molecule type" value="mRNA"/>
</dbReference>
<dbReference type="EMBL" id="AK169016">
    <property type="protein sequence ID" value="BAE40813.1"/>
    <property type="molecule type" value="mRNA"/>
</dbReference>
<dbReference type="EMBL" id="AK172446">
    <property type="protein sequence ID" value="BAE43008.1"/>
    <property type="molecule type" value="mRNA"/>
</dbReference>
<dbReference type="EMBL" id="BC058690">
    <property type="protein sequence ID" value="AAH58690.1"/>
    <property type="molecule type" value="mRNA"/>
</dbReference>
<dbReference type="CCDS" id="CCDS20817.1"/>
<dbReference type="RefSeq" id="NP_001404155.1">
    <property type="nucleotide sequence ID" value="NM_001417226.1"/>
</dbReference>
<dbReference type="RefSeq" id="NP_033121.2">
    <property type="nucleotide sequence ID" value="NM_009095.3"/>
</dbReference>
<dbReference type="RefSeq" id="XP_036008703.1">
    <property type="nucleotide sequence ID" value="XM_036152810.1"/>
</dbReference>
<dbReference type="PDB" id="7CPU">
    <property type="method" value="EM"/>
    <property type="resolution" value="2.82 A"/>
    <property type="chains" value="SF=1-204"/>
</dbReference>
<dbReference type="PDB" id="7CPV">
    <property type="method" value="EM"/>
    <property type="resolution" value="3.03 A"/>
    <property type="chains" value="SF=1-204"/>
</dbReference>
<dbReference type="PDB" id="7LS1">
    <property type="method" value="EM"/>
    <property type="resolution" value="3.30 A"/>
    <property type="chains" value="s2=1-204"/>
</dbReference>
<dbReference type="PDB" id="7LS2">
    <property type="method" value="EM"/>
    <property type="resolution" value="3.10 A"/>
    <property type="chains" value="s2=1-204"/>
</dbReference>
<dbReference type="PDBsum" id="7CPU"/>
<dbReference type="PDBsum" id="7CPV"/>
<dbReference type="PDBsum" id="7LS1"/>
<dbReference type="PDBsum" id="7LS2"/>
<dbReference type="EMDB" id="EMD-23500"/>
<dbReference type="EMDB" id="EMD-23501"/>
<dbReference type="EMDB" id="EMD-30432"/>
<dbReference type="EMDB" id="EMD-30433"/>
<dbReference type="SMR" id="P97461"/>
<dbReference type="BioGRID" id="203012">
    <property type="interactions" value="100"/>
</dbReference>
<dbReference type="ComplexPortal" id="CPX-5261">
    <property type="entry name" value="40S cytosolic small ribosomal subunit"/>
</dbReference>
<dbReference type="FunCoup" id="P97461">
    <property type="interactions" value="1910"/>
</dbReference>
<dbReference type="IntAct" id="P97461">
    <property type="interactions" value="2"/>
</dbReference>
<dbReference type="STRING" id="10090.ENSMUSP00000104179"/>
<dbReference type="GlyGen" id="P97461">
    <property type="glycosylation" value="2 sites, 1 O-linked glycan (1 site)"/>
</dbReference>
<dbReference type="iPTMnet" id="P97461"/>
<dbReference type="PhosphoSitePlus" id="P97461"/>
<dbReference type="SwissPalm" id="P97461"/>
<dbReference type="jPOST" id="P97461"/>
<dbReference type="PaxDb" id="10090-ENSMUSP00000004554"/>
<dbReference type="PeptideAtlas" id="P97461"/>
<dbReference type="ProteomicsDB" id="256936"/>
<dbReference type="ProteomicsDB" id="329197"/>
<dbReference type="Pumba" id="P97461"/>
<dbReference type="TopDownProteomics" id="P97461"/>
<dbReference type="TopDownProteomics" id="Q91V55"/>
<dbReference type="Antibodypedia" id="33338">
    <property type="antibodies" value="257 antibodies from 29 providers"/>
</dbReference>
<dbReference type="DNASU" id="20103"/>
<dbReference type="Ensembl" id="ENSMUST00000004554.14">
    <property type="protein sequence ID" value="ENSMUSP00000004554.8"/>
    <property type="gene ID" value="ENSMUSG00000012848.16"/>
</dbReference>
<dbReference type="Ensembl" id="ENSMUST00000108539.8">
    <property type="protein sequence ID" value="ENSMUSP00000104179.2"/>
    <property type="gene ID" value="ENSMUSG00000012848.16"/>
</dbReference>
<dbReference type="GeneID" id="20103"/>
<dbReference type="KEGG" id="mmu:20103"/>
<dbReference type="AGR" id="MGI:1097682"/>
<dbReference type="CTD" id="6193"/>
<dbReference type="MGI" id="MGI:1097682">
    <property type="gene designation" value="Rps5"/>
</dbReference>
<dbReference type="VEuPathDB" id="HostDB:ENSMUSG00000012848"/>
<dbReference type="eggNOG" id="KOG3291">
    <property type="taxonomic scope" value="Eukaryota"/>
</dbReference>
<dbReference type="GeneTree" id="ENSGT00390000010806"/>
<dbReference type="HOGENOM" id="CLU_063975_0_0_1"/>
<dbReference type="InParanoid" id="P97461"/>
<dbReference type="OMA" id="KMNIVER"/>
<dbReference type="OrthoDB" id="10264639at2759"/>
<dbReference type="PhylomeDB" id="P97461"/>
<dbReference type="TreeFam" id="TF300872"/>
<dbReference type="Reactome" id="R-MMU-156827">
    <property type="pathway name" value="L13a-mediated translational silencing of Ceruloplasmin expression"/>
</dbReference>
<dbReference type="Reactome" id="R-MMU-1799339">
    <property type="pathway name" value="SRP-dependent cotranslational protein targeting to membrane"/>
</dbReference>
<dbReference type="Reactome" id="R-MMU-6791226">
    <property type="pathway name" value="Major pathway of rRNA processing in the nucleolus and cytosol"/>
</dbReference>
<dbReference type="Reactome" id="R-MMU-72649">
    <property type="pathway name" value="Translation initiation complex formation"/>
</dbReference>
<dbReference type="Reactome" id="R-MMU-72689">
    <property type="pathway name" value="Formation of a pool of free 40S subunits"/>
</dbReference>
<dbReference type="Reactome" id="R-MMU-72695">
    <property type="pathway name" value="Formation of the ternary complex, and subsequently, the 43S complex"/>
</dbReference>
<dbReference type="Reactome" id="R-MMU-72702">
    <property type="pathway name" value="Ribosomal scanning and start codon recognition"/>
</dbReference>
<dbReference type="Reactome" id="R-MMU-72706">
    <property type="pathway name" value="GTP hydrolysis and joining of the 60S ribosomal subunit"/>
</dbReference>
<dbReference type="Reactome" id="R-MMU-975956">
    <property type="pathway name" value="Nonsense Mediated Decay (NMD) independent of the Exon Junction Complex (EJC)"/>
</dbReference>
<dbReference type="Reactome" id="R-MMU-975957">
    <property type="pathway name" value="Nonsense Mediated Decay (NMD) enhanced by the Exon Junction Complex (EJC)"/>
</dbReference>
<dbReference type="BioGRID-ORCS" id="20103">
    <property type="hits" value="25 hits in 75 CRISPR screens"/>
</dbReference>
<dbReference type="CD-CODE" id="CE726F99">
    <property type="entry name" value="Postsynaptic density"/>
</dbReference>
<dbReference type="ChiTaRS" id="Rps5">
    <property type="organism name" value="mouse"/>
</dbReference>
<dbReference type="PRO" id="PR:P97461"/>
<dbReference type="Proteomes" id="UP000000589">
    <property type="component" value="Chromosome 7"/>
</dbReference>
<dbReference type="RNAct" id="P97461">
    <property type="molecule type" value="protein"/>
</dbReference>
<dbReference type="Bgee" id="ENSMUSG00000012848">
    <property type="expression patterns" value="Expressed in gonadal ridge and 264 other cell types or tissues"/>
</dbReference>
<dbReference type="GO" id="GO:0005737">
    <property type="term" value="C:cytoplasm"/>
    <property type="evidence" value="ECO:0000303"/>
    <property type="project" value="ComplexPortal"/>
</dbReference>
<dbReference type="GO" id="GO:0005829">
    <property type="term" value="C:cytosol"/>
    <property type="evidence" value="ECO:0000304"/>
    <property type="project" value="Reactome"/>
</dbReference>
<dbReference type="GO" id="GO:0022627">
    <property type="term" value="C:cytosolic small ribosomal subunit"/>
    <property type="evidence" value="ECO:0000314"/>
    <property type="project" value="UniProtKB"/>
</dbReference>
<dbReference type="GO" id="GO:0005730">
    <property type="term" value="C:nucleolus"/>
    <property type="evidence" value="ECO:0007669"/>
    <property type="project" value="UniProtKB-SubCell"/>
</dbReference>
<dbReference type="GO" id="GO:0098794">
    <property type="term" value="C:postsynapse"/>
    <property type="evidence" value="ECO:0000303"/>
    <property type="project" value="SynGO"/>
</dbReference>
<dbReference type="GO" id="GO:0098793">
    <property type="term" value="C:presynapse"/>
    <property type="evidence" value="ECO:0000303"/>
    <property type="project" value="SynGO"/>
</dbReference>
<dbReference type="GO" id="GO:1990904">
    <property type="term" value="C:ribonucleoprotein complex"/>
    <property type="evidence" value="ECO:0000266"/>
    <property type="project" value="MGI"/>
</dbReference>
<dbReference type="GO" id="GO:0005840">
    <property type="term" value="C:ribosome"/>
    <property type="evidence" value="ECO:0000303"/>
    <property type="project" value="SynGO"/>
</dbReference>
<dbReference type="GO" id="GO:0032040">
    <property type="term" value="C:small-subunit processome"/>
    <property type="evidence" value="ECO:0000250"/>
    <property type="project" value="UniProtKB"/>
</dbReference>
<dbReference type="GO" id="GO:0045202">
    <property type="term" value="C:synapse"/>
    <property type="evidence" value="ECO:0000314"/>
    <property type="project" value="SynGO"/>
</dbReference>
<dbReference type="GO" id="GO:0003729">
    <property type="term" value="F:mRNA binding"/>
    <property type="evidence" value="ECO:0007669"/>
    <property type="project" value="Ensembl"/>
</dbReference>
<dbReference type="GO" id="GO:0003735">
    <property type="term" value="F:structural constituent of ribosome"/>
    <property type="evidence" value="ECO:0000314"/>
    <property type="project" value="UniProtKB"/>
</dbReference>
<dbReference type="GO" id="GO:0002181">
    <property type="term" value="P:cytoplasmic translation"/>
    <property type="evidence" value="ECO:0000303"/>
    <property type="project" value="ComplexPortal"/>
</dbReference>
<dbReference type="GO" id="GO:0006450">
    <property type="term" value="P:regulation of translational fidelity"/>
    <property type="evidence" value="ECO:0007669"/>
    <property type="project" value="Ensembl"/>
</dbReference>
<dbReference type="GO" id="GO:0042274">
    <property type="term" value="P:ribosomal small subunit biogenesis"/>
    <property type="evidence" value="ECO:0000250"/>
    <property type="project" value="UniProtKB"/>
</dbReference>
<dbReference type="GO" id="GO:0140242">
    <property type="term" value="P:translation at postsynapse"/>
    <property type="evidence" value="ECO:0000303"/>
    <property type="project" value="SynGO"/>
</dbReference>
<dbReference type="GO" id="GO:0140236">
    <property type="term" value="P:translation at presynapse"/>
    <property type="evidence" value="ECO:0000303"/>
    <property type="project" value="SynGO"/>
</dbReference>
<dbReference type="CDD" id="cd14867">
    <property type="entry name" value="uS7_Eukaryote"/>
    <property type="match status" value="1"/>
</dbReference>
<dbReference type="FunFam" id="1.10.455.10:FF:000003">
    <property type="entry name" value="40S ribosomal protein S5"/>
    <property type="match status" value="1"/>
</dbReference>
<dbReference type="Gene3D" id="1.10.455.10">
    <property type="entry name" value="Ribosomal protein S7 domain"/>
    <property type="match status" value="1"/>
</dbReference>
<dbReference type="InterPro" id="IPR000235">
    <property type="entry name" value="Ribosomal_uS7"/>
</dbReference>
<dbReference type="InterPro" id="IPR020606">
    <property type="entry name" value="Ribosomal_uS7_CS"/>
</dbReference>
<dbReference type="InterPro" id="IPR023798">
    <property type="entry name" value="Ribosomal_uS7_dom"/>
</dbReference>
<dbReference type="InterPro" id="IPR036823">
    <property type="entry name" value="Ribosomal_uS7_dom_sf"/>
</dbReference>
<dbReference type="InterPro" id="IPR005716">
    <property type="entry name" value="Ribosomal_uS7_euk/arc"/>
</dbReference>
<dbReference type="NCBIfam" id="NF003106">
    <property type="entry name" value="PRK04027.1"/>
    <property type="match status" value="1"/>
</dbReference>
<dbReference type="NCBIfam" id="TIGR01028">
    <property type="entry name" value="uS7_euk_arch"/>
    <property type="match status" value="1"/>
</dbReference>
<dbReference type="PANTHER" id="PTHR11205">
    <property type="entry name" value="RIBOSOMAL PROTEIN S7"/>
    <property type="match status" value="1"/>
</dbReference>
<dbReference type="Pfam" id="PF00177">
    <property type="entry name" value="Ribosomal_S7"/>
    <property type="match status" value="1"/>
</dbReference>
<dbReference type="PIRSF" id="PIRSF002122">
    <property type="entry name" value="RPS7p_RPS7a_RPS5e_RPS7o"/>
    <property type="match status" value="1"/>
</dbReference>
<dbReference type="SUPFAM" id="SSF47973">
    <property type="entry name" value="Ribosomal protein S7"/>
    <property type="match status" value="1"/>
</dbReference>
<dbReference type="PROSITE" id="PS00052">
    <property type="entry name" value="RIBOSOMAL_S7"/>
    <property type="match status" value="1"/>
</dbReference>
<comment type="function">
    <text evidence="1 2">Component of the small ribosomal subunit (PubMed:36517592). The ribosome is a large ribonucleoprotein complex responsible for the synthesis of proteins in the cell (PubMed:36517592). Part of the small subunit (SSU) processome, first precursor of the small eukaryotic ribosomal subunit. During the assembly of the SSU processome in the nucleolus, many ribosome biogenesis factors, an RNA chaperone and ribosomal proteins associate with the nascent pre-rRNA and work in concert to generate RNA folding, modifications, rearrangements and cleavage as well as targeted degradation of pre-ribosomal RNA by the RNA exosome (By similarity).</text>
</comment>
<comment type="subunit">
    <text evidence="1 2">Component of the small ribosomal subunit (PubMed:36517592). Part of the small subunit (SSU) processome, composed of more than 70 proteins and the RNA chaperone small nucleolar RNA (snoRNA) U3 (By similarity).</text>
</comment>
<comment type="subcellular location">
    <subcellularLocation>
        <location evidence="2">Cytoplasm</location>
    </subcellularLocation>
    <subcellularLocation>
        <location evidence="1">Nucleus</location>
        <location evidence="1">Nucleolus</location>
    </subcellularLocation>
</comment>
<comment type="similarity">
    <text evidence="3">Belongs to the universal ribosomal protein uS7 family.</text>
</comment>
<accession>P97461</accession>
<accession>O08607</accession>
<accession>Q91V55</accession>
<protein>
    <recommendedName>
        <fullName evidence="3">Small ribosomal subunit protein uS7</fullName>
    </recommendedName>
    <alternativeName>
        <fullName>40S ribosomal protein S5</fullName>
    </alternativeName>
    <component>
        <recommendedName>
            <fullName>Small ribosomal subunit protein uS7, N-terminally processed</fullName>
        </recommendedName>
    </component>
</protein>
<proteinExistence type="evidence at protein level"/>
<evidence type="ECO:0000250" key="1">
    <source>
        <dbReference type="UniProtKB" id="P46782"/>
    </source>
</evidence>
<evidence type="ECO:0000269" key="2">
    <source>
    </source>
</evidence>
<evidence type="ECO:0000305" key="3"/>
<evidence type="ECO:0007744" key="4">
    <source>
        <dbReference type="PDB" id="7CPU"/>
    </source>
</evidence>
<evidence type="ECO:0007744" key="5">
    <source>
        <dbReference type="PDB" id="7CPV"/>
    </source>
</evidence>
<evidence type="ECO:0007744" key="6">
    <source>
    </source>
</evidence>
<sequence length="204" mass="22876">MTEWEAATPAVAETPDIKLFGKWSTDDVQINDISLQDYIAVKEKYAKYLPHSAGRYAAKRFRKAQCPIVERLTNSMMMHGRNNGKKLMTVRIVKHAFEIIHLLTGENPLQVLVNAIINSGPREDSTRIGRAGTVRRQAVDVSPLRRVNQAIWLLCTGAREAAFRNIKTIAECLADELINAAKGSSNSYAIKKKDELERVAKSNR</sequence>
<reference key="1">
    <citation type="journal article" date="1997" name="Biochim. Biophys. Acta">
        <title>Cloning, sequencing and expression in MEL cells of a cDNA encoding the mouse ribosomal protein S5.</title>
        <authorList>
            <person name="Vanegas N."/>
            <person name="Castaneda V."/>
            <person name="Santamaria D."/>
            <person name="Hernandez P."/>
            <person name="Schvartzman J.B."/>
            <person name="Krimer D.B."/>
        </authorList>
    </citation>
    <scope>NUCLEOTIDE SEQUENCE [MRNA]</scope>
</reference>
<reference key="2">
    <citation type="submission" date="1998-09" db="EMBL/GenBank/DDBJ databases">
        <title>Cloning, sequencing and expression of a cDNA coding for the mouse S5 ribosomal protein in differentiating murine erythroleukemia (MEL) cells.</title>
        <authorList>
            <person name="Vizirianakis I.S."/>
            <person name="Pappas I.S."/>
            <person name="Tsiftsoglou A.S."/>
        </authorList>
    </citation>
    <scope>NUCLEOTIDE SEQUENCE [MRNA]</scope>
    <source>
        <strain>DAB/2J</strain>
    </source>
</reference>
<reference key="3">
    <citation type="journal article" date="2005" name="Science">
        <title>The transcriptional landscape of the mammalian genome.</title>
        <authorList>
            <person name="Carninci P."/>
            <person name="Kasukawa T."/>
            <person name="Katayama S."/>
            <person name="Gough J."/>
            <person name="Frith M.C."/>
            <person name="Maeda N."/>
            <person name="Oyama R."/>
            <person name="Ravasi T."/>
            <person name="Lenhard B."/>
            <person name="Wells C."/>
            <person name="Kodzius R."/>
            <person name="Shimokawa K."/>
            <person name="Bajic V.B."/>
            <person name="Brenner S.E."/>
            <person name="Batalov S."/>
            <person name="Forrest A.R."/>
            <person name="Zavolan M."/>
            <person name="Davis M.J."/>
            <person name="Wilming L.G."/>
            <person name="Aidinis V."/>
            <person name="Allen J.E."/>
            <person name="Ambesi-Impiombato A."/>
            <person name="Apweiler R."/>
            <person name="Aturaliya R.N."/>
            <person name="Bailey T.L."/>
            <person name="Bansal M."/>
            <person name="Baxter L."/>
            <person name="Beisel K.W."/>
            <person name="Bersano T."/>
            <person name="Bono H."/>
            <person name="Chalk A.M."/>
            <person name="Chiu K.P."/>
            <person name="Choudhary V."/>
            <person name="Christoffels A."/>
            <person name="Clutterbuck D.R."/>
            <person name="Crowe M.L."/>
            <person name="Dalla E."/>
            <person name="Dalrymple B.P."/>
            <person name="de Bono B."/>
            <person name="Della Gatta G."/>
            <person name="di Bernardo D."/>
            <person name="Down T."/>
            <person name="Engstrom P."/>
            <person name="Fagiolini M."/>
            <person name="Faulkner G."/>
            <person name="Fletcher C.F."/>
            <person name="Fukushima T."/>
            <person name="Furuno M."/>
            <person name="Futaki S."/>
            <person name="Gariboldi M."/>
            <person name="Georgii-Hemming P."/>
            <person name="Gingeras T.R."/>
            <person name="Gojobori T."/>
            <person name="Green R.E."/>
            <person name="Gustincich S."/>
            <person name="Harbers M."/>
            <person name="Hayashi Y."/>
            <person name="Hensch T.K."/>
            <person name="Hirokawa N."/>
            <person name="Hill D."/>
            <person name="Huminiecki L."/>
            <person name="Iacono M."/>
            <person name="Ikeo K."/>
            <person name="Iwama A."/>
            <person name="Ishikawa T."/>
            <person name="Jakt M."/>
            <person name="Kanapin A."/>
            <person name="Katoh M."/>
            <person name="Kawasawa Y."/>
            <person name="Kelso J."/>
            <person name="Kitamura H."/>
            <person name="Kitano H."/>
            <person name="Kollias G."/>
            <person name="Krishnan S.P."/>
            <person name="Kruger A."/>
            <person name="Kummerfeld S.K."/>
            <person name="Kurochkin I.V."/>
            <person name="Lareau L.F."/>
            <person name="Lazarevic D."/>
            <person name="Lipovich L."/>
            <person name="Liu J."/>
            <person name="Liuni S."/>
            <person name="McWilliam S."/>
            <person name="Madan Babu M."/>
            <person name="Madera M."/>
            <person name="Marchionni L."/>
            <person name="Matsuda H."/>
            <person name="Matsuzawa S."/>
            <person name="Miki H."/>
            <person name="Mignone F."/>
            <person name="Miyake S."/>
            <person name="Morris K."/>
            <person name="Mottagui-Tabar S."/>
            <person name="Mulder N."/>
            <person name="Nakano N."/>
            <person name="Nakauchi H."/>
            <person name="Ng P."/>
            <person name="Nilsson R."/>
            <person name="Nishiguchi S."/>
            <person name="Nishikawa S."/>
            <person name="Nori F."/>
            <person name="Ohara O."/>
            <person name="Okazaki Y."/>
            <person name="Orlando V."/>
            <person name="Pang K.C."/>
            <person name="Pavan W.J."/>
            <person name="Pavesi G."/>
            <person name="Pesole G."/>
            <person name="Petrovsky N."/>
            <person name="Piazza S."/>
            <person name="Reed J."/>
            <person name="Reid J.F."/>
            <person name="Ring B.Z."/>
            <person name="Ringwald M."/>
            <person name="Rost B."/>
            <person name="Ruan Y."/>
            <person name="Salzberg S.L."/>
            <person name="Sandelin A."/>
            <person name="Schneider C."/>
            <person name="Schoenbach C."/>
            <person name="Sekiguchi K."/>
            <person name="Semple C.A."/>
            <person name="Seno S."/>
            <person name="Sessa L."/>
            <person name="Sheng Y."/>
            <person name="Shibata Y."/>
            <person name="Shimada H."/>
            <person name="Shimada K."/>
            <person name="Silva D."/>
            <person name="Sinclair B."/>
            <person name="Sperling S."/>
            <person name="Stupka E."/>
            <person name="Sugiura K."/>
            <person name="Sultana R."/>
            <person name="Takenaka Y."/>
            <person name="Taki K."/>
            <person name="Tammoja K."/>
            <person name="Tan S.L."/>
            <person name="Tang S."/>
            <person name="Taylor M.S."/>
            <person name="Tegner J."/>
            <person name="Teichmann S.A."/>
            <person name="Ueda H.R."/>
            <person name="van Nimwegen E."/>
            <person name="Verardo R."/>
            <person name="Wei C.L."/>
            <person name="Yagi K."/>
            <person name="Yamanishi H."/>
            <person name="Zabarovsky E."/>
            <person name="Zhu S."/>
            <person name="Zimmer A."/>
            <person name="Hide W."/>
            <person name="Bult C."/>
            <person name="Grimmond S.M."/>
            <person name="Teasdale R.D."/>
            <person name="Liu E.T."/>
            <person name="Brusic V."/>
            <person name="Quackenbush J."/>
            <person name="Wahlestedt C."/>
            <person name="Mattick J.S."/>
            <person name="Hume D.A."/>
            <person name="Kai C."/>
            <person name="Sasaki D."/>
            <person name="Tomaru Y."/>
            <person name="Fukuda S."/>
            <person name="Kanamori-Katayama M."/>
            <person name="Suzuki M."/>
            <person name="Aoki J."/>
            <person name="Arakawa T."/>
            <person name="Iida J."/>
            <person name="Imamura K."/>
            <person name="Itoh M."/>
            <person name="Kato T."/>
            <person name="Kawaji H."/>
            <person name="Kawagashira N."/>
            <person name="Kawashima T."/>
            <person name="Kojima M."/>
            <person name="Kondo S."/>
            <person name="Konno H."/>
            <person name="Nakano K."/>
            <person name="Ninomiya N."/>
            <person name="Nishio T."/>
            <person name="Okada M."/>
            <person name="Plessy C."/>
            <person name="Shibata K."/>
            <person name="Shiraki T."/>
            <person name="Suzuki S."/>
            <person name="Tagami M."/>
            <person name="Waki K."/>
            <person name="Watahiki A."/>
            <person name="Okamura-Oho Y."/>
            <person name="Suzuki H."/>
            <person name="Kawai J."/>
            <person name="Hayashizaki Y."/>
        </authorList>
    </citation>
    <scope>NUCLEOTIDE SEQUENCE [LARGE SCALE MRNA]</scope>
    <source>
        <strain>BALB/cJ</strain>
        <strain>C57BL/6J</strain>
        <strain>DBA/2J</strain>
        <strain>NOD</strain>
        <tissue>Bone marrow</tissue>
        <tissue>Kidney</tissue>
        <tissue>Liver</tissue>
        <tissue>Spinal cord</tissue>
        <tissue>Spleen</tissue>
        <tissue>Thymus</tissue>
        <tissue>Tongue</tissue>
    </source>
</reference>
<reference key="4">
    <citation type="journal article" date="2009" name="PLoS Biol.">
        <title>Lineage-specific biology revealed by a finished genome assembly of the mouse.</title>
        <authorList>
            <person name="Church D.M."/>
            <person name="Goodstadt L."/>
            <person name="Hillier L.W."/>
            <person name="Zody M.C."/>
            <person name="Goldstein S."/>
            <person name="She X."/>
            <person name="Bult C.J."/>
            <person name="Agarwala R."/>
            <person name="Cherry J.L."/>
            <person name="DiCuccio M."/>
            <person name="Hlavina W."/>
            <person name="Kapustin Y."/>
            <person name="Meric P."/>
            <person name="Maglott D."/>
            <person name="Birtle Z."/>
            <person name="Marques A.C."/>
            <person name="Graves T."/>
            <person name="Zhou S."/>
            <person name="Teague B."/>
            <person name="Potamousis K."/>
            <person name="Churas C."/>
            <person name="Place M."/>
            <person name="Herschleb J."/>
            <person name="Runnheim R."/>
            <person name="Forrest D."/>
            <person name="Amos-Landgraf J."/>
            <person name="Schwartz D.C."/>
            <person name="Cheng Z."/>
            <person name="Lindblad-Toh K."/>
            <person name="Eichler E.E."/>
            <person name="Ponting C.P."/>
        </authorList>
    </citation>
    <scope>NUCLEOTIDE SEQUENCE [LARGE SCALE GENOMIC DNA]</scope>
    <source>
        <strain>C57BL/6J</strain>
    </source>
</reference>
<reference key="5">
    <citation type="journal article" date="2004" name="Genome Res.">
        <title>The status, quality, and expansion of the NIH full-length cDNA project: the Mammalian Gene Collection (MGC).</title>
        <authorList>
            <consortium name="The MGC Project Team"/>
        </authorList>
    </citation>
    <scope>NUCLEOTIDE SEQUENCE [LARGE SCALE MRNA]</scope>
    <source>
        <strain>C57BL/6J</strain>
        <tissue>Brain</tissue>
    </source>
</reference>
<reference key="6">
    <citation type="journal article" date="2010" name="Cell">
        <title>A tissue-specific atlas of mouse protein phosphorylation and expression.</title>
        <authorList>
            <person name="Huttlin E.L."/>
            <person name="Jedrychowski M.P."/>
            <person name="Elias J.E."/>
            <person name="Goswami T."/>
            <person name="Rad R."/>
            <person name="Beausoleil S.A."/>
            <person name="Villen J."/>
            <person name="Haas W."/>
            <person name="Sowa M.E."/>
            <person name="Gygi S.P."/>
        </authorList>
    </citation>
    <scope>IDENTIFICATION BY MASS SPECTROMETRY [LARGE SCALE ANALYSIS]</scope>
    <source>
        <tissue>Brain</tissue>
        <tissue>Brown adipose tissue</tissue>
        <tissue>Heart</tissue>
        <tissue>Kidney</tissue>
        <tissue>Liver</tissue>
        <tissue>Lung</tissue>
        <tissue>Pancreas</tissue>
        <tissue>Spleen</tissue>
        <tissue>Testis</tissue>
    </source>
</reference>
<reference key="7">
    <citation type="journal article" date="2013" name="Mol. Cell">
        <title>SIRT5-mediated lysine desuccinylation impacts diverse metabolic pathways.</title>
        <authorList>
            <person name="Park J."/>
            <person name="Chen Y."/>
            <person name="Tishkoff D.X."/>
            <person name="Peng C."/>
            <person name="Tan M."/>
            <person name="Dai L."/>
            <person name="Xie Z."/>
            <person name="Zhang Y."/>
            <person name="Zwaans B.M."/>
            <person name="Skinner M.E."/>
            <person name="Lombard D.B."/>
            <person name="Zhao Y."/>
        </authorList>
    </citation>
    <scope>ACETYLATION [LARGE SCALE ANALYSIS] AT LYS-47</scope>
    <scope>IDENTIFICATION BY MASS SPECTROMETRY [LARGE SCALE ANALYSIS]</scope>
    <source>
        <tissue>Embryonic fibroblast</tissue>
    </source>
</reference>
<reference evidence="4 5" key="8">
    <citation type="journal article" date="2022" name="Nature">
        <title>A male germ-cell-specific ribosome controls male fertility.</title>
        <authorList>
            <person name="Li H."/>
            <person name="Huo Y."/>
            <person name="He X."/>
            <person name="Yao L."/>
            <person name="Zhang H."/>
            <person name="Cui Y."/>
            <person name="Xiao H."/>
            <person name="Xie W."/>
            <person name="Zhang D."/>
            <person name="Wang Y."/>
            <person name="Zhang S."/>
            <person name="Tu H."/>
            <person name="Cheng Y."/>
            <person name="Guo Y."/>
            <person name="Cao X."/>
            <person name="Zhu Y."/>
            <person name="Jiang T."/>
            <person name="Guo X."/>
            <person name="Qin Y."/>
            <person name="Sha J."/>
        </authorList>
    </citation>
    <scope>STRUCTURE BY ELECTRON MICROSCOPY (3.03 ANGSTROMS) OF RIBOSOME</scope>
    <scope>FUNCTION</scope>
    <scope>SUBUNIT</scope>
    <scope>SUBCELLULAR LOCATION</scope>
</reference>
<keyword id="KW-0002">3D-structure</keyword>
<keyword id="KW-0007">Acetylation</keyword>
<keyword id="KW-0963">Cytoplasm</keyword>
<keyword id="KW-1017">Isopeptide bond</keyword>
<keyword id="KW-0539">Nucleus</keyword>
<keyword id="KW-0597">Phosphoprotein</keyword>
<keyword id="KW-1185">Reference proteome</keyword>
<keyword id="KW-0687">Ribonucleoprotein</keyword>
<keyword id="KW-0689">Ribosomal protein</keyword>
<keyword id="KW-0832">Ubl conjugation</keyword>